<gene>
    <name type="ordered locus">Pret-106</name>
</gene>
<dbReference type="EMBL" id="AY261363">
    <property type="status" value="NOT_ANNOTATED_CDS"/>
    <property type="molecule type" value="Genomic_DNA"/>
</dbReference>
<dbReference type="SMR" id="P0CA07"/>
<dbReference type="Proteomes" id="UP000000859">
    <property type="component" value="Segment"/>
</dbReference>
<dbReference type="GO" id="GO:0044220">
    <property type="term" value="C:host cell perinuclear region of cytoplasm"/>
    <property type="evidence" value="ECO:0007669"/>
    <property type="project" value="UniProtKB-SubCell"/>
</dbReference>
<dbReference type="GO" id="GO:0044423">
    <property type="term" value="C:virion component"/>
    <property type="evidence" value="ECO:0007669"/>
    <property type="project" value="UniProtKB-KW"/>
</dbReference>
<evidence type="ECO:0000250" key="1"/>
<evidence type="ECO:0000250" key="2">
    <source>
        <dbReference type="UniProtKB" id="P0CA06"/>
    </source>
</evidence>
<evidence type="ECO:0000250" key="3">
    <source>
        <dbReference type="UniProtKB" id="Q65179"/>
    </source>
</evidence>
<evidence type="ECO:0000305" key="4"/>
<accession>P0CA07</accession>
<feature type="initiator methionine" description="Removed" evidence="1">
    <location>
        <position position="1"/>
    </location>
</feature>
<feature type="chain" id="PRO_0000373457" description="Polyprotein pp62" evidence="1">
    <location>
        <begin position="2"/>
        <end position="530"/>
    </location>
</feature>
<feature type="chain" id="PRO_0000373458" description="p15" evidence="1">
    <location>
        <begin position="2"/>
        <end position="158"/>
    </location>
</feature>
<feature type="chain" id="PRO_0000373459" description="p35" evidence="1">
    <location>
        <begin position="159"/>
        <end position="463"/>
    </location>
</feature>
<feature type="chain" id="PRO_0000373460" description="p8" evidence="1">
    <location>
        <begin position="464"/>
        <end position="530"/>
    </location>
</feature>
<feature type="site" description="Cleavage; by viral protease S273R" evidence="3">
    <location>
        <begin position="158"/>
        <end position="159"/>
    </location>
</feature>
<feature type="site" description="Cleavage; by viral protease S273R" evidence="3">
    <location>
        <begin position="463"/>
        <end position="464"/>
    </location>
</feature>
<protein>
    <recommendedName>
        <fullName evidence="3">Polyprotein pp62</fullName>
    </recommendedName>
    <alternativeName>
        <fullName>60 kDa polyprotein</fullName>
        <shortName>p60</shortName>
    </alternativeName>
    <alternativeName>
        <fullName>62 kDa polyprotein</fullName>
        <shortName>p62</shortName>
    </alternativeName>
    <component>
        <recommendedName>
            <fullName evidence="3">p15</fullName>
        </recommendedName>
    </component>
    <component>
        <recommendedName>
            <fullName evidence="3">p35</fullName>
        </recommendedName>
        <alternativeName>
            <fullName>PIG1</fullName>
        </alternativeName>
    </component>
    <component>
        <recommendedName>
            <fullName evidence="3">p8</fullName>
        </recommendedName>
    </component>
</protein>
<organismHost>
    <name type="scientific">Ornithodoros</name>
    <name type="common">relapsing fever ticks</name>
    <dbReference type="NCBI Taxonomy" id="6937"/>
</organismHost>
<organismHost>
    <name type="scientific">Phacochoerus aethiopicus</name>
    <name type="common">Warthog</name>
    <dbReference type="NCBI Taxonomy" id="85517"/>
</organismHost>
<organismHost>
    <name type="scientific">Phacochoerus africanus</name>
    <name type="common">Warthog</name>
    <dbReference type="NCBI Taxonomy" id="41426"/>
</organismHost>
<organismHost>
    <name type="scientific">Potamochoerus larvatus</name>
    <name type="common">Bushpig</name>
    <dbReference type="NCBI Taxonomy" id="273792"/>
</organismHost>
<organismHost>
    <name type="scientific">Sus scrofa</name>
    <name type="common">Pig</name>
    <dbReference type="NCBI Taxonomy" id="9823"/>
</organismHost>
<proteinExistence type="inferred from homology"/>
<sequence length="530" mass="60547">MPSNMKQFCKISVWLQQHDPDLLEIINNLCMLGNLSAAKYKHGVTFIYPKQAKIRDEIKKHAYSNDPSQAIKTLESLILPFYIPTPAEFTGEIGSYTGVKLEVEKTEANKVILKNGEAVLVPAADFKPFPDRRLAVWIMESGSMPLEGPPYKRKKEGGGNDPPVPKHISPYTPRTRIAIEVEKAFDDCMRQNWCSVNNPYLAKSVSLLSFLSLNHPTEFIKVLPLIDFDPLVTFYLLLEPYKTHGDDFLIPETILFGPTGWNGTDLYQSAMLEFKKFFTQITRQTFMDIADSATKEVDVPICYSDPETVHSYTNHVRTEILHHNAVNKVTTPNLVVQAYNELEQTNTIRHYGPIFPESTINALRFWKKLWQDEQRFVIHGLHRTLMDQPTYETSEFAEIVRNLRFSRPGNNYINELNITSPAMYGDKHTTGDIAPNDRFAMLVAFINSTDFLYTAIPEEKVGGNETQTSSLTDLVPTRLHSFLNHNLSKLKILNRAQQTVRNILSNDCLNQLKHYVKHTGKNEILKILQE</sequence>
<name>PP62_ASFP4</name>
<keyword id="KW-1015">Disulfide bond</keyword>
<keyword id="KW-1035">Host cytoplasm</keyword>
<keyword id="KW-0426">Late protein</keyword>
<keyword id="KW-0832">Ubl conjugation</keyword>
<keyword id="KW-0946">Virion</keyword>
<organism>
    <name type="scientific">African swine fever virus (isolate Tick/South Africa/Pretoriuskop Pr4/1996)</name>
    <name type="common">ASFV</name>
    <dbReference type="NCBI Taxonomy" id="561443"/>
    <lineage>
        <taxon>Viruses</taxon>
        <taxon>Varidnaviria</taxon>
        <taxon>Bamfordvirae</taxon>
        <taxon>Nucleocytoviricota</taxon>
        <taxon>Pokkesviricetes</taxon>
        <taxon>Asfuvirales</taxon>
        <taxon>Asfarviridae</taxon>
        <taxon>Asfivirus</taxon>
        <taxon>African swine fever virus</taxon>
    </lineage>
</organism>
<comment type="function">
    <molecule>Polyprotein pp62</molecule>
    <text evidence="3">Essential for the correct assembly and maturation of the core of the virion.</text>
</comment>
<comment type="function">
    <molecule>p35</molecule>
    <text evidence="3">Component of the core shell (By similarity). Binds to phosphatidylserine, which may enable the core shell binding with the inner membrane (By similarity).</text>
</comment>
<comment type="function">
    <molecule>p15</molecule>
    <text evidence="3">Component of the core shell (By similarity). Binds to phosphatidylserine and DNA, which may link the core shell to the inner membrane and to the viral nucleoid (By similarity).</text>
</comment>
<comment type="function">
    <molecule>p8</molecule>
    <text evidence="3">Component of the core shell.</text>
</comment>
<comment type="subunit">
    <molecule>p35</molecule>
    <text evidence="3">Monomer (By similarity). Predominantly exists as a monomer, with very little dimers (By similarity). Homodimerization seems to be linked to low pH (By similarity).</text>
</comment>
<comment type="subunit">
    <molecule>p15</molecule>
    <text evidence="3">Homodimer; disulfide-linked (By similarity). Homotrimer; disulfide-linked (By similarity). Homohexamer (By similarity).</text>
</comment>
<comment type="subcellular location">
    <molecule>Polyprotein pp62</molecule>
    <subcellularLocation>
        <location evidence="3">Host cytoplasm</location>
        <location evidence="3">Host perinuclear region</location>
    </subcellularLocation>
    <text evidence="3">Found in perinuclear cytoplasmic viral factories during assembly.</text>
</comment>
<comment type="subcellular location">
    <molecule>p35</molecule>
    <subcellularLocation>
        <location evidence="3">Virion</location>
    </subcellularLocation>
    <text evidence="3">Located in the core shell, which functions like a matrix between the DNA and the inner envelope.</text>
</comment>
<comment type="subcellular location">
    <molecule>p15</molecule>
    <subcellularLocation>
        <location evidence="2">Virion</location>
    </subcellularLocation>
    <text evidence="3">Located in the core shell, which functions like a matrix between the DNA and the inner envelope.</text>
</comment>
<comment type="subcellular location">
    <molecule>p8</molecule>
    <subcellularLocation>
        <location evidence="3">Virion</location>
    </subcellularLocation>
    <text evidence="3">Located in the core shell, which functions like a matrix between the DNA and the inner envelope.</text>
</comment>
<comment type="induction">
    <text evidence="3">Expressed in the late phase of the viral replicative cycle.</text>
</comment>
<comment type="PTM">
    <molecule>p15</molecule>
    <text evidence="2">Monoubiquitinated in vitro by viral UBCv1.</text>
</comment>
<comment type="PTM">
    <molecule>Polyprotein pp62</molecule>
    <text evidence="3">Specific enzymatic cleavages in vivo yield mature proteins.</text>
</comment>
<comment type="similarity">
    <text evidence="4">Belongs to the asfivirus polyprotein pp62 family.</text>
</comment>
<reference key="1">
    <citation type="submission" date="2003-03" db="EMBL/GenBank/DDBJ databases">
        <title>African swine fever virus genomes.</title>
        <authorList>
            <person name="Kutish G.F."/>
            <person name="Rock D.L."/>
        </authorList>
    </citation>
    <scope>NUCLEOTIDE SEQUENCE [GENOMIC DNA]</scope>
</reference>